<evidence type="ECO:0000255" key="1">
    <source>
        <dbReference type="HAMAP-Rule" id="MF_00196"/>
    </source>
</evidence>
<reference key="1">
    <citation type="submission" date="2007-09" db="EMBL/GenBank/DDBJ databases">
        <title>Complete sequence of chromosome of Serratia proteamaculans 568.</title>
        <authorList>
            <consortium name="US DOE Joint Genome Institute"/>
            <person name="Copeland A."/>
            <person name="Lucas S."/>
            <person name="Lapidus A."/>
            <person name="Barry K."/>
            <person name="Glavina del Rio T."/>
            <person name="Dalin E."/>
            <person name="Tice H."/>
            <person name="Pitluck S."/>
            <person name="Chain P."/>
            <person name="Malfatti S."/>
            <person name="Shin M."/>
            <person name="Vergez L."/>
            <person name="Schmutz J."/>
            <person name="Larimer F."/>
            <person name="Land M."/>
            <person name="Hauser L."/>
            <person name="Kyrpides N."/>
            <person name="Kim E."/>
            <person name="Taghavi S."/>
            <person name="Newman L."/>
            <person name="Vangronsveld J."/>
            <person name="van der Lelie D."/>
            <person name="Richardson P."/>
        </authorList>
    </citation>
    <scope>NUCLEOTIDE SEQUENCE [LARGE SCALE GENOMIC DNA]</scope>
    <source>
        <strain>568</strain>
    </source>
</reference>
<proteinExistence type="inferred from homology"/>
<protein>
    <recommendedName>
        <fullName evidence="1">Mannitol-1-phosphate 5-dehydrogenase</fullName>
        <ecNumber evidence="1">1.1.1.17</ecNumber>
    </recommendedName>
</protein>
<gene>
    <name evidence="1" type="primary">mtlD</name>
    <name type="ordered locus">Spro_0073</name>
</gene>
<comment type="catalytic activity">
    <reaction evidence="1">
        <text>D-mannitol 1-phosphate + NAD(+) = beta-D-fructose 6-phosphate + NADH + H(+)</text>
        <dbReference type="Rhea" id="RHEA:19661"/>
        <dbReference type="ChEBI" id="CHEBI:15378"/>
        <dbReference type="ChEBI" id="CHEBI:57540"/>
        <dbReference type="ChEBI" id="CHEBI:57634"/>
        <dbReference type="ChEBI" id="CHEBI:57945"/>
        <dbReference type="ChEBI" id="CHEBI:61381"/>
        <dbReference type="EC" id="1.1.1.17"/>
    </reaction>
</comment>
<comment type="similarity">
    <text evidence="1">Belongs to the mannitol dehydrogenase family.</text>
</comment>
<sequence>MKALHFGAGNIGRGFIGKLLADAQAELTFADVNQTVLDLLNSRKSYQVHVVGEQARVEQVNNVSAVNSGSEEAVALIAEADIVTTAVGPQILAKIAGTIAKGLSKRHQQGNSQPLNIIACENMVRGTSQLKQHVFDVLPQEDQAWALQHVGFVDSAVDRIVPPAEAGSSDPLEVTVETFSEWIVDQTQFKGQPPAIAGMELTDNLMAFVERKLFTLNTGHAITAYLGQQAGLQTIRDAILDPKIRQVVKGAMEESGAVLIKRYGFDAAKHAAYIDKILSRFENPYLHDDVERVGRQPLRKLSAGDRLIKPLLGTLEYGLPHANLIQGIAAAMSYRSEQDPQAKELVELLAKLGPKAALAQISGLPAESEVVEQAVAVYNAMQK</sequence>
<organism>
    <name type="scientific">Serratia proteamaculans (strain 568)</name>
    <dbReference type="NCBI Taxonomy" id="399741"/>
    <lineage>
        <taxon>Bacteria</taxon>
        <taxon>Pseudomonadati</taxon>
        <taxon>Pseudomonadota</taxon>
        <taxon>Gammaproteobacteria</taxon>
        <taxon>Enterobacterales</taxon>
        <taxon>Yersiniaceae</taxon>
        <taxon>Serratia</taxon>
    </lineage>
</organism>
<name>MTLD_SERP5</name>
<dbReference type="EC" id="1.1.1.17" evidence="1"/>
<dbReference type="EMBL" id="CP000826">
    <property type="protein sequence ID" value="ABV39183.1"/>
    <property type="molecule type" value="Genomic_DNA"/>
</dbReference>
<dbReference type="SMR" id="A8G7U3"/>
<dbReference type="STRING" id="399741.Spro_0073"/>
<dbReference type="KEGG" id="spe:Spro_0073"/>
<dbReference type="eggNOG" id="COG0246">
    <property type="taxonomic scope" value="Bacteria"/>
</dbReference>
<dbReference type="HOGENOM" id="CLU_036089_2_0_6"/>
<dbReference type="OrthoDB" id="271711at2"/>
<dbReference type="GO" id="GO:0005829">
    <property type="term" value="C:cytosol"/>
    <property type="evidence" value="ECO:0007669"/>
    <property type="project" value="TreeGrafter"/>
</dbReference>
<dbReference type="GO" id="GO:0008926">
    <property type="term" value="F:mannitol-1-phosphate 5-dehydrogenase activity"/>
    <property type="evidence" value="ECO:0007669"/>
    <property type="project" value="UniProtKB-UniRule"/>
</dbReference>
<dbReference type="GO" id="GO:0019592">
    <property type="term" value="P:mannitol catabolic process"/>
    <property type="evidence" value="ECO:0007669"/>
    <property type="project" value="TreeGrafter"/>
</dbReference>
<dbReference type="FunFam" id="1.10.1040.10:FF:000009">
    <property type="entry name" value="Mannitol-1-phosphate 5-dehydrogenase"/>
    <property type="match status" value="1"/>
</dbReference>
<dbReference type="FunFam" id="3.40.50.720:FF:000075">
    <property type="entry name" value="Mannitol-1-phosphate 5-dehydrogenase"/>
    <property type="match status" value="1"/>
</dbReference>
<dbReference type="Gene3D" id="1.10.1040.10">
    <property type="entry name" value="N-(1-d-carboxylethyl)-l-norvaline Dehydrogenase, domain 2"/>
    <property type="match status" value="1"/>
</dbReference>
<dbReference type="Gene3D" id="3.40.50.720">
    <property type="entry name" value="NAD(P)-binding Rossmann-like Domain"/>
    <property type="match status" value="1"/>
</dbReference>
<dbReference type="HAMAP" id="MF_00196">
    <property type="entry name" value="Mannitol_dehydrog"/>
    <property type="match status" value="1"/>
</dbReference>
<dbReference type="InterPro" id="IPR008927">
    <property type="entry name" value="6-PGluconate_DH-like_C_sf"/>
</dbReference>
<dbReference type="InterPro" id="IPR013328">
    <property type="entry name" value="6PGD_dom2"/>
</dbReference>
<dbReference type="InterPro" id="IPR023028">
    <property type="entry name" value="Mannitol_1_phos_5_DH"/>
</dbReference>
<dbReference type="InterPro" id="IPR000669">
    <property type="entry name" value="Mannitol_DH"/>
</dbReference>
<dbReference type="InterPro" id="IPR013118">
    <property type="entry name" value="Mannitol_DH_C"/>
</dbReference>
<dbReference type="InterPro" id="IPR023027">
    <property type="entry name" value="Mannitol_DH_CS"/>
</dbReference>
<dbReference type="InterPro" id="IPR013131">
    <property type="entry name" value="Mannitol_DH_N"/>
</dbReference>
<dbReference type="InterPro" id="IPR036291">
    <property type="entry name" value="NAD(P)-bd_dom_sf"/>
</dbReference>
<dbReference type="NCBIfam" id="NF002646">
    <property type="entry name" value="PRK02318.1-2"/>
    <property type="match status" value="1"/>
</dbReference>
<dbReference type="NCBIfam" id="NF002647">
    <property type="entry name" value="PRK02318.1-3"/>
    <property type="match status" value="1"/>
</dbReference>
<dbReference type="NCBIfam" id="NF002650">
    <property type="entry name" value="PRK02318.2-2"/>
    <property type="match status" value="1"/>
</dbReference>
<dbReference type="NCBIfam" id="NF002652">
    <property type="entry name" value="PRK02318.2-5"/>
    <property type="match status" value="1"/>
</dbReference>
<dbReference type="PANTHER" id="PTHR30524:SF0">
    <property type="entry name" value="ALTRONATE OXIDOREDUCTASE-RELATED"/>
    <property type="match status" value="1"/>
</dbReference>
<dbReference type="PANTHER" id="PTHR30524">
    <property type="entry name" value="MANNITOL-1-PHOSPHATE 5-DEHYDROGENASE"/>
    <property type="match status" value="1"/>
</dbReference>
<dbReference type="Pfam" id="PF01232">
    <property type="entry name" value="Mannitol_dh"/>
    <property type="match status" value="1"/>
</dbReference>
<dbReference type="Pfam" id="PF08125">
    <property type="entry name" value="Mannitol_dh_C"/>
    <property type="match status" value="1"/>
</dbReference>
<dbReference type="PRINTS" id="PR00084">
    <property type="entry name" value="MTLDHDRGNASE"/>
</dbReference>
<dbReference type="SUPFAM" id="SSF48179">
    <property type="entry name" value="6-phosphogluconate dehydrogenase C-terminal domain-like"/>
    <property type="match status" value="1"/>
</dbReference>
<dbReference type="SUPFAM" id="SSF51735">
    <property type="entry name" value="NAD(P)-binding Rossmann-fold domains"/>
    <property type="match status" value="1"/>
</dbReference>
<dbReference type="PROSITE" id="PS00974">
    <property type="entry name" value="MANNITOL_DHGENASE"/>
    <property type="match status" value="1"/>
</dbReference>
<feature type="chain" id="PRO_1000058533" description="Mannitol-1-phosphate 5-dehydrogenase">
    <location>
        <begin position="1"/>
        <end position="383"/>
    </location>
</feature>
<feature type="binding site" evidence="1">
    <location>
        <begin position="3"/>
        <end position="14"/>
    </location>
    <ligand>
        <name>NAD(+)</name>
        <dbReference type="ChEBI" id="CHEBI:57540"/>
    </ligand>
</feature>
<accession>A8G7U3</accession>
<keyword id="KW-0520">NAD</keyword>
<keyword id="KW-0560">Oxidoreductase</keyword>